<evidence type="ECO:0000255" key="1">
    <source>
        <dbReference type="HAMAP-Rule" id="MF_01224"/>
    </source>
</evidence>
<accession>Q7N6P5</accession>
<organism>
    <name type="scientific">Photorhabdus laumondii subsp. laumondii (strain DSM 15139 / CIP 105565 / TT01)</name>
    <name type="common">Photorhabdus luminescens subsp. laumondii</name>
    <dbReference type="NCBI Taxonomy" id="243265"/>
    <lineage>
        <taxon>Bacteria</taxon>
        <taxon>Pseudomonadati</taxon>
        <taxon>Pseudomonadota</taxon>
        <taxon>Gammaproteobacteria</taxon>
        <taxon>Enterobacterales</taxon>
        <taxon>Morganellaceae</taxon>
        <taxon>Photorhabdus</taxon>
    </lineage>
</organism>
<gene>
    <name evidence="1" type="primary">moaC</name>
    <name type="ordered locus">plu1500</name>
</gene>
<dbReference type="EC" id="4.6.1.17" evidence="1"/>
<dbReference type="EMBL" id="BX571864">
    <property type="protein sequence ID" value="CAE13793.1"/>
    <property type="molecule type" value="Genomic_DNA"/>
</dbReference>
<dbReference type="RefSeq" id="WP_011145801.1">
    <property type="nucleotide sequence ID" value="NC_005126.1"/>
</dbReference>
<dbReference type="SMR" id="Q7N6P5"/>
<dbReference type="STRING" id="243265.plu1500"/>
<dbReference type="GeneID" id="48847791"/>
<dbReference type="KEGG" id="plu:plu1500"/>
<dbReference type="eggNOG" id="COG0315">
    <property type="taxonomic scope" value="Bacteria"/>
</dbReference>
<dbReference type="HOGENOM" id="CLU_074693_1_1_6"/>
<dbReference type="OrthoDB" id="9794429at2"/>
<dbReference type="UniPathway" id="UPA00344"/>
<dbReference type="Proteomes" id="UP000002514">
    <property type="component" value="Chromosome"/>
</dbReference>
<dbReference type="GO" id="GO:0061799">
    <property type="term" value="F:cyclic pyranopterin monophosphate synthase activity"/>
    <property type="evidence" value="ECO:0007669"/>
    <property type="project" value="UniProtKB-UniRule"/>
</dbReference>
<dbReference type="GO" id="GO:0061798">
    <property type="term" value="F:GTP 3',8'-cyclase activity"/>
    <property type="evidence" value="ECO:0007669"/>
    <property type="project" value="TreeGrafter"/>
</dbReference>
<dbReference type="GO" id="GO:0006777">
    <property type="term" value="P:Mo-molybdopterin cofactor biosynthetic process"/>
    <property type="evidence" value="ECO:0007669"/>
    <property type="project" value="UniProtKB-UniRule"/>
</dbReference>
<dbReference type="CDD" id="cd01420">
    <property type="entry name" value="MoaC_PE"/>
    <property type="match status" value="1"/>
</dbReference>
<dbReference type="FunFam" id="3.30.70.640:FF:000001">
    <property type="entry name" value="Cyclic pyranopterin monophosphate synthase"/>
    <property type="match status" value="1"/>
</dbReference>
<dbReference type="Gene3D" id="3.30.70.640">
    <property type="entry name" value="Molybdopterin cofactor biosynthesis C (MoaC) domain"/>
    <property type="match status" value="1"/>
</dbReference>
<dbReference type="HAMAP" id="MF_01224_B">
    <property type="entry name" value="MoaC_B"/>
    <property type="match status" value="1"/>
</dbReference>
<dbReference type="InterPro" id="IPR023045">
    <property type="entry name" value="MoaC"/>
</dbReference>
<dbReference type="InterPro" id="IPR047594">
    <property type="entry name" value="MoaC_bact/euk"/>
</dbReference>
<dbReference type="InterPro" id="IPR036522">
    <property type="entry name" value="MoaC_sf"/>
</dbReference>
<dbReference type="InterPro" id="IPR050105">
    <property type="entry name" value="MoCo_biosynth_MoaA/MoaC"/>
</dbReference>
<dbReference type="InterPro" id="IPR002820">
    <property type="entry name" value="Mopterin_CF_biosynth-C_dom"/>
</dbReference>
<dbReference type="NCBIfam" id="TIGR00581">
    <property type="entry name" value="moaC"/>
    <property type="match status" value="1"/>
</dbReference>
<dbReference type="NCBIfam" id="NF006870">
    <property type="entry name" value="PRK09364.1"/>
    <property type="match status" value="1"/>
</dbReference>
<dbReference type="PANTHER" id="PTHR22960:SF0">
    <property type="entry name" value="MOLYBDENUM COFACTOR BIOSYNTHESIS PROTEIN 1"/>
    <property type="match status" value="1"/>
</dbReference>
<dbReference type="PANTHER" id="PTHR22960">
    <property type="entry name" value="MOLYBDOPTERIN COFACTOR SYNTHESIS PROTEIN A"/>
    <property type="match status" value="1"/>
</dbReference>
<dbReference type="Pfam" id="PF01967">
    <property type="entry name" value="MoaC"/>
    <property type="match status" value="1"/>
</dbReference>
<dbReference type="SUPFAM" id="SSF55040">
    <property type="entry name" value="Molybdenum cofactor biosynthesis protein C, MoaC"/>
    <property type="match status" value="1"/>
</dbReference>
<name>MOAC_PHOLL</name>
<sequence>MSQLTHINSTGEAHMVDVSAKAETSREARAEAFVGMKPETLAMIIEGRHHKGDVFATARIAGIQAAKRTWELIPLCHPLLLTKVEVQLEAQTKYNRVRIESCCRLTGKTGVEMEALTAASVAALTIYDMCKAVQKDMVIGPVRLLEKIGGKLGHFKVEQ</sequence>
<reference key="1">
    <citation type="journal article" date="2003" name="Nat. Biotechnol.">
        <title>The genome sequence of the entomopathogenic bacterium Photorhabdus luminescens.</title>
        <authorList>
            <person name="Duchaud E."/>
            <person name="Rusniok C."/>
            <person name="Frangeul L."/>
            <person name="Buchrieser C."/>
            <person name="Givaudan A."/>
            <person name="Taourit S."/>
            <person name="Bocs S."/>
            <person name="Boursaux-Eude C."/>
            <person name="Chandler M."/>
            <person name="Charles J.-F."/>
            <person name="Dassa E."/>
            <person name="Derose R."/>
            <person name="Derzelle S."/>
            <person name="Freyssinet G."/>
            <person name="Gaudriault S."/>
            <person name="Medigue C."/>
            <person name="Lanois A."/>
            <person name="Powell K."/>
            <person name="Siguier P."/>
            <person name="Vincent R."/>
            <person name="Wingate V."/>
            <person name="Zouine M."/>
            <person name="Glaser P."/>
            <person name="Boemare N."/>
            <person name="Danchin A."/>
            <person name="Kunst F."/>
        </authorList>
    </citation>
    <scope>NUCLEOTIDE SEQUENCE [LARGE SCALE GENOMIC DNA]</scope>
    <source>
        <strain>DSM 15139 / CIP 105565 / TT01</strain>
    </source>
</reference>
<proteinExistence type="inferred from homology"/>
<protein>
    <recommendedName>
        <fullName evidence="1">Cyclic pyranopterin monophosphate synthase</fullName>
        <ecNumber evidence="1">4.6.1.17</ecNumber>
    </recommendedName>
    <alternativeName>
        <fullName evidence="1">Molybdenum cofactor biosynthesis protein C</fullName>
    </alternativeName>
</protein>
<comment type="function">
    <text evidence="1">Catalyzes the conversion of (8S)-3',8-cyclo-7,8-dihydroguanosine 5'-triphosphate to cyclic pyranopterin monophosphate (cPMP).</text>
</comment>
<comment type="catalytic activity">
    <reaction evidence="1">
        <text>(8S)-3',8-cyclo-7,8-dihydroguanosine 5'-triphosphate = cyclic pyranopterin phosphate + diphosphate</text>
        <dbReference type="Rhea" id="RHEA:49580"/>
        <dbReference type="ChEBI" id="CHEBI:33019"/>
        <dbReference type="ChEBI" id="CHEBI:59648"/>
        <dbReference type="ChEBI" id="CHEBI:131766"/>
        <dbReference type="EC" id="4.6.1.17"/>
    </reaction>
</comment>
<comment type="pathway">
    <text evidence="1">Cofactor biosynthesis; molybdopterin biosynthesis.</text>
</comment>
<comment type="subunit">
    <text evidence="1">Homohexamer; trimer of dimers.</text>
</comment>
<comment type="similarity">
    <text evidence="1">Belongs to the MoaC family.</text>
</comment>
<keyword id="KW-0456">Lyase</keyword>
<keyword id="KW-0501">Molybdenum cofactor biosynthesis</keyword>
<keyword id="KW-1185">Reference proteome</keyword>
<feature type="chain" id="PRO_1000054115" description="Cyclic pyranopterin monophosphate synthase">
    <location>
        <begin position="1"/>
        <end position="159"/>
    </location>
</feature>
<feature type="active site" evidence="1">
    <location>
        <position position="128"/>
    </location>
</feature>
<feature type="binding site" evidence="1">
    <location>
        <begin position="75"/>
        <end position="77"/>
    </location>
    <ligand>
        <name>substrate</name>
    </ligand>
</feature>
<feature type="binding site" evidence="1">
    <location>
        <begin position="113"/>
        <end position="114"/>
    </location>
    <ligand>
        <name>substrate</name>
    </ligand>
</feature>